<reference key="1">
    <citation type="submission" date="2006-02" db="EMBL/GenBank/DDBJ databases">
        <title>Complete sequence of chromosome of Rhodoferax ferrireducens DSM 15236.</title>
        <authorList>
            <person name="Copeland A."/>
            <person name="Lucas S."/>
            <person name="Lapidus A."/>
            <person name="Barry K."/>
            <person name="Detter J.C."/>
            <person name="Glavina del Rio T."/>
            <person name="Hammon N."/>
            <person name="Israni S."/>
            <person name="Pitluck S."/>
            <person name="Brettin T."/>
            <person name="Bruce D."/>
            <person name="Han C."/>
            <person name="Tapia R."/>
            <person name="Gilna P."/>
            <person name="Kiss H."/>
            <person name="Schmutz J."/>
            <person name="Larimer F."/>
            <person name="Land M."/>
            <person name="Kyrpides N."/>
            <person name="Ivanova N."/>
            <person name="Richardson P."/>
        </authorList>
    </citation>
    <scope>NUCLEOTIDE SEQUENCE [LARGE SCALE GENOMIC DNA]</scope>
    <source>
        <strain>ATCC BAA-621 / DSM 15236 / T118</strain>
    </source>
</reference>
<sequence>MRNHQDPIETDAVIVGAGPVGLFQVFELGLLEIKAHVVDSLAYPGGQCIELYPDKPIYDIPAVPVCTGRELTQNLLKQIAPFGATFHYGQEVTVVEKQSDGRFFVETSKGTRFLSKTIFIAAGVGAFQPRTLKVDGLEVFEDSQLFYRVRNPADFADKNLVIVGGGDSALDWALDFVKDGPNKAASVILIHRRDGFKAAPASVAKMRELCDALEMQFIVGQVTGFEAQDSLLTGIKVTGADGVTRVVPLDVLLVFFGLSPKLGPIAEWGLDIERKQLKVDTEKFSTSEPGIFAVGDINIYPGKKKLILSGFHECALAAFGAMPIISPEKKVFLQYTTTSPKLHKVLGVESPVFD</sequence>
<protein>
    <recommendedName>
        <fullName evidence="1">Ferredoxin--NADP reductase</fullName>
        <shortName evidence="1">FNR</shortName>
        <shortName evidence="1">Fd-NADP(+) reductase</shortName>
        <ecNumber evidence="1">1.18.1.2</ecNumber>
    </recommendedName>
</protein>
<gene>
    <name type="ordered locus">Rfer_2462</name>
</gene>
<comment type="catalytic activity">
    <reaction evidence="1">
        <text>2 reduced [2Fe-2S]-[ferredoxin] + NADP(+) + H(+) = 2 oxidized [2Fe-2S]-[ferredoxin] + NADPH</text>
        <dbReference type="Rhea" id="RHEA:20125"/>
        <dbReference type="Rhea" id="RHEA-COMP:10000"/>
        <dbReference type="Rhea" id="RHEA-COMP:10001"/>
        <dbReference type="ChEBI" id="CHEBI:15378"/>
        <dbReference type="ChEBI" id="CHEBI:33737"/>
        <dbReference type="ChEBI" id="CHEBI:33738"/>
        <dbReference type="ChEBI" id="CHEBI:57783"/>
        <dbReference type="ChEBI" id="CHEBI:58349"/>
        <dbReference type="EC" id="1.18.1.2"/>
    </reaction>
</comment>
<comment type="cofactor">
    <cofactor evidence="1">
        <name>FAD</name>
        <dbReference type="ChEBI" id="CHEBI:57692"/>
    </cofactor>
    <text evidence="1">Binds 1 FAD per subunit.</text>
</comment>
<comment type="subunit">
    <text evidence="1">Homodimer.</text>
</comment>
<comment type="similarity">
    <text evidence="1">Belongs to the ferredoxin--NADP reductase type 2 family.</text>
</comment>
<dbReference type="EC" id="1.18.1.2" evidence="1"/>
<dbReference type="EMBL" id="CP000267">
    <property type="protein sequence ID" value="ABD70179.1"/>
    <property type="molecule type" value="Genomic_DNA"/>
</dbReference>
<dbReference type="RefSeq" id="WP_011464747.1">
    <property type="nucleotide sequence ID" value="NC_007908.1"/>
</dbReference>
<dbReference type="SMR" id="Q21VM4"/>
<dbReference type="STRING" id="338969.Rfer_2462"/>
<dbReference type="KEGG" id="rfr:Rfer_2462"/>
<dbReference type="eggNOG" id="COG0492">
    <property type="taxonomic scope" value="Bacteria"/>
</dbReference>
<dbReference type="HOGENOM" id="CLU_031864_5_5_4"/>
<dbReference type="OrthoDB" id="9806179at2"/>
<dbReference type="Proteomes" id="UP000008332">
    <property type="component" value="Chromosome"/>
</dbReference>
<dbReference type="GO" id="GO:0004324">
    <property type="term" value="F:ferredoxin-NADP+ reductase activity"/>
    <property type="evidence" value="ECO:0007669"/>
    <property type="project" value="UniProtKB-UniRule"/>
</dbReference>
<dbReference type="GO" id="GO:0050660">
    <property type="term" value="F:flavin adenine dinucleotide binding"/>
    <property type="evidence" value="ECO:0007669"/>
    <property type="project" value="UniProtKB-UniRule"/>
</dbReference>
<dbReference type="GO" id="GO:0050661">
    <property type="term" value="F:NADP binding"/>
    <property type="evidence" value="ECO:0007669"/>
    <property type="project" value="UniProtKB-UniRule"/>
</dbReference>
<dbReference type="Gene3D" id="3.50.50.60">
    <property type="entry name" value="FAD/NAD(P)-binding domain"/>
    <property type="match status" value="2"/>
</dbReference>
<dbReference type="HAMAP" id="MF_01685">
    <property type="entry name" value="FENR2"/>
    <property type="match status" value="1"/>
</dbReference>
<dbReference type="InterPro" id="IPR036188">
    <property type="entry name" value="FAD/NAD-bd_sf"/>
</dbReference>
<dbReference type="InterPro" id="IPR023753">
    <property type="entry name" value="FAD/NAD-binding_dom"/>
</dbReference>
<dbReference type="InterPro" id="IPR022890">
    <property type="entry name" value="Fd--NADP_Rdtase_type_2"/>
</dbReference>
<dbReference type="InterPro" id="IPR050097">
    <property type="entry name" value="Ferredoxin-NADP_redctase_2"/>
</dbReference>
<dbReference type="PANTHER" id="PTHR48105">
    <property type="entry name" value="THIOREDOXIN REDUCTASE 1-RELATED-RELATED"/>
    <property type="match status" value="1"/>
</dbReference>
<dbReference type="Pfam" id="PF07992">
    <property type="entry name" value="Pyr_redox_2"/>
    <property type="match status" value="1"/>
</dbReference>
<dbReference type="PRINTS" id="PR00368">
    <property type="entry name" value="FADPNR"/>
</dbReference>
<dbReference type="PRINTS" id="PR00469">
    <property type="entry name" value="PNDRDTASEII"/>
</dbReference>
<dbReference type="SUPFAM" id="SSF51905">
    <property type="entry name" value="FAD/NAD(P)-binding domain"/>
    <property type="match status" value="2"/>
</dbReference>
<feature type="chain" id="PRO_0000364912" description="Ferredoxin--NADP reductase">
    <location>
        <begin position="1"/>
        <end position="354"/>
    </location>
</feature>
<feature type="binding site" evidence="1">
    <location>
        <position position="39"/>
    </location>
    <ligand>
        <name>FAD</name>
        <dbReference type="ChEBI" id="CHEBI:57692"/>
    </ligand>
</feature>
<feature type="binding site" evidence="1">
    <location>
        <position position="47"/>
    </location>
    <ligand>
        <name>FAD</name>
        <dbReference type="ChEBI" id="CHEBI:57692"/>
    </ligand>
</feature>
<feature type="binding site" evidence="1">
    <location>
        <position position="52"/>
    </location>
    <ligand>
        <name>FAD</name>
        <dbReference type="ChEBI" id="CHEBI:57692"/>
    </ligand>
</feature>
<feature type="binding site" evidence="1">
    <location>
        <position position="92"/>
    </location>
    <ligand>
        <name>FAD</name>
        <dbReference type="ChEBI" id="CHEBI:57692"/>
    </ligand>
</feature>
<feature type="binding site" evidence="1">
    <location>
        <position position="127"/>
    </location>
    <ligand>
        <name>FAD</name>
        <dbReference type="ChEBI" id="CHEBI:57692"/>
    </ligand>
</feature>
<feature type="binding site" evidence="1">
    <location>
        <position position="296"/>
    </location>
    <ligand>
        <name>FAD</name>
        <dbReference type="ChEBI" id="CHEBI:57692"/>
    </ligand>
</feature>
<feature type="binding site" evidence="1">
    <location>
        <position position="337"/>
    </location>
    <ligand>
        <name>FAD</name>
        <dbReference type="ChEBI" id="CHEBI:57692"/>
    </ligand>
</feature>
<name>FENR_ALBFT</name>
<evidence type="ECO:0000255" key="1">
    <source>
        <dbReference type="HAMAP-Rule" id="MF_01685"/>
    </source>
</evidence>
<organism>
    <name type="scientific">Albidiferax ferrireducens (strain ATCC BAA-621 / DSM 15236 / T118)</name>
    <name type="common">Rhodoferax ferrireducens</name>
    <dbReference type="NCBI Taxonomy" id="338969"/>
    <lineage>
        <taxon>Bacteria</taxon>
        <taxon>Pseudomonadati</taxon>
        <taxon>Pseudomonadota</taxon>
        <taxon>Betaproteobacteria</taxon>
        <taxon>Burkholderiales</taxon>
        <taxon>Comamonadaceae</taxon>
        <taxon>Rhodoferax</taxon>
    </lineage>
</organism>
<proteinExistence type="inferred from homology"/>
<keyword id="KW-0274">FAD</keyword>
<keyword id="KW-0285">Flavoprotein</keyword>
<keyword id="KW-0521">NADP</keyword>
<keyword id="KW-0560">Oxidoreductase</keyword>
<keyword id="KW-1185">Reference proteome</keyword>
<accession>Q21VM4</accession>